<sequence length="270" mass="28570">MFLVNSFLKGGGGGGGGGGLGGGLGNVLGGLISGAAGGGGGGGGGGGMGLGGGGGGGGTAMRILGGVISAISEAAAQYNPEPPPPRSHYSNIEANESEEERQFRKLFVQLAGDDMEVSATELMNILNKVVTRHPDLKTDGFGIDTCRSMVAVMDSDTTGKLGFEEFKYLWNNIKKWQGIYKRFDTDRSGTIGSNELPGAFEAAGFHLNQHIYSMIIRRYSDETGNMDFDNFISCLVRLDAMFRAFRSLDKNGTGQIQVNIQEWLQLTMYS</sequence>
<name>CPNS1_RAT</name>
<accession>Q64537</accession>
<accession>P97572</accession>
<accession>Q4V795</accession>
<comment type="function">
    <text evidence="2">Regulatory subunit of the calcium-regulated non-lysosomal thiol-protease which catalyzes limited proteolysis of substrates involved in cytoskeletal remodeling and signal transduction. Essential for embryonic development (By similarity).</text>
</comment>
<comment type="subunit">
    <text evidence="1">Homodimer or heterodimer of a large (catalytic) and a small (regulatory) subunit. In presence of calcium, the heterodimer dissociates (By similarity).</text>
</comment>
<comment type="interaction">
    <interactant intactId="EBI-918712">
        <id>Q64537</id>
    </interactant>
    <interactant intactId="EBI-1040438">
        <id>Q07009</id>
        <label>Capn2</label>
    </interactant>
    <organismsDiffer>false</organismsDiffer>
    <experiments>8</experiments>
</comment>
<comment type="subcellular location">
    <subcellularLocation>
        <location>Cytoplasm</location>
    </subcellularLocation>
    <subcellularLocation>
        <location>Cell membrane</location>
    </subcellularLocation>
    <text evidence="1">Translocates to the plasma membrane upon calcium binding (By similarity). Allows the formation of the homodimer and also appears to mediate the contact between the large catalytic subunit and small regulatory subunit for the formation of the heterodimer.</text>
</comment>
<comment type="domain">
    <text>The contact of the 5th EF-hand domain from each monomer allows the formation of the homodimer and also appears to mediate the contact between the large catalytic subunit and small regulatory subunit for the formation of the heterodimer.</text>
</comment>
<comment type="domain">
    <text>EF-hand domains are paired. EF-hand 1 is paired with EF-hand 2 and EF-hand 3 is paired with EF-hand 4. The fifth EF-hand domain, left unpaired, does not bind the calcium but is responsible of the dimerization by EF-embrace. The first four EF-hand domains bind calcium, however it is not sure if the binding of EF-hand 4 to calcium is physiologically relevant.</text>
</comment>
<protein>
    <recommendedName>
        <fullName>Calpain small subunit 1</fullName>
        <shortName>CSS1</shortName>
    </recommendedName>
    <alternativeName>
        <fullName>Calcium-activated neutral proteinase small subunit</fullName>
        <shortName>CANP small subunit</shortName>
    </alternativeName>
    <alternativeName>
        <fullName>Calcium-dependent protease small subunit</fullName>
        <shortName>CDPS</shortName>
    </alternativeName>
    <alternativeName>
        <fullName>Calcium-dependent protease small subunit 1</fullName>
    </alternativeName>
    <alternativeName>
        <fullName>Calpain regulatory subunit</fullName>
    </alternativeName>
</protein>
<feature type="chain" id="PRO_0000073717" description="Calpain small subunit 1">
    <location>
        <begin position="1"/>
        <end position="270"/>
    </location>
</feature>
<feature type="domain" description="EF-hand 1; atypical" evidence="8">
    <location>
        <begin position="98"/>
        <end position="132"/>
    </location>
</feature>
<feature type="domain" description="EF-hand 2" evidence="4">
    <location>
        <begin position="141"/>
        <end position="174"/>
    </location>
</feature>
<feature type="domain" description="EF-hand 3" evidence="4">
    <location>
        <begin position="171"/>
        <end position="206"/>
    </location>
</feature>
<feature type="domain" description="EF-hand 4" evidence="8">
    <location>
        <begin position="207"/>
        <end position="235"/>
    </location>
</feature>
<feature type="domain" description="EF-hand 5" evidence="4">
    <location>
        <begin position="236"/>
        <end position="270"/>
    </location>
</feature>
<feature type="binding site" evidence="5 6 7 9 10 11">
    <location>
        <position position="111"/>
    </location>
    <ligand>
        <name>Ca(2+)</name>
        <dbReference type="ChEBI" id="CHEBI:29108"/>
        <label>1</label>
    </ligand>
</feature>
<feature type="binding site" evidence="5 6 7 9 10 11">
    <location>
        <position position="114"/>
    </location>
    <ligand>
        <name>Ca(2+)</name>
        <dbReference type="ChEBI" id="CHEBI:29108"/>
        <label>1</label>
    </ligand>
</feature>
<feature type="binding site" evidence="5 6 7 9 10 11">
    <location>
        <position position="116"/>
    </location>
    <ligand>
        <name>Ca(2+)</name>
        <dbReference type="ChEBI" id="CHEBI:29108"/>
        <label>1</label>
    </ligand>
</feature>
<feature type="binding site" evidence="5 6 7 9 10 11">
    <location>
        <position position="121"/>
    </location>
    <ligand>
        <name>Ca(2+)</name>
        <dbReference type="ChEBI" id="CHEBI:29108"/>
        <label>1</label>
    </ligand>
</feature>
<feature type="binding site" evidence="5 6 7 9 10 11">
    <location>
        <position position="139"/>
    </location>
    <ligand>
        <name>Ca(2+)</name>
        <dbReference type="ChEBI" id="CHEBI:29108"/>
        <label>4</label>
    </ligand>
</feature>
<feature type="binding site" evidence="4 5 6 7 9 10 11">
    <location>
        <position position="154"/>
    </location>
    <ligand>
        <name>Ca(2+)</name>
        <dbReference type="ChEBI" id="CHEBI:29108"/>
        <label>2</label>
    </ligand>
</feature>
<feature type="binding site" evidence="4 5 6 7 9 10 11">
    <location>
        <position position="156"/>
    </location>
    <ligand>
        <name>Ca(2+)</name>
        <dbReference type="ChEBI" id="CHEBI:29108"/>
        <label>2</label>
    </ligand>
</feature>
<feature type="binding site" evidence="4 5 6 7 9 10 11">
    <location>
        <position position="158"/>
    </location>
    <ligand>
        <name>Ca(2+)</name>
        <dbReference type="ChEBI" id="CHEBI:29108"/>
        <label>2</label>
    </ligand>
</feature>
<feature type="binding site" evidence="4 5 6 7 9 10 11">
    <location>
        <position position="160"/>
    </location>
    <ligand>
        <name>Ca(2+)</name>
        <dbReference type="ChEBI" id="CHEBI:29108"/>
        <label>2</label>
    </ligand>
</feature>
<feature type="binding site" evidence="4 5 6 7 9 10 11">
    <location>
        <position position="165"/>
    </location>
    <ligand>
        <name>Ca(2+)</name>
        <dbReference type="ChEBI" id="CHEBI:29108"/>
        <label>2</label>
    </ligand>
</feature>
<feature type="binding site" evidence="4 5 6 7 9 10 11">
    <location>
        <position position="184"/>
    </location>
    <ligand>
        <name>Ca(2+)</name>
        <dbReference type="ChEBI" id="CHEBI:29108"/>
        <label>3</label>
    </ligand>
</feature>
<feature type="binding site" evidence="4 5 6 7 9 10 11">
    <location>
        <position position="186"/>
    </location>
    <ligand>
        <name>Ca(2+)</name>
        <dbReference type="ChEBI" id="CHEBI:29108"/>
        <label>3</label>
    </ligand>
</feature>
<feature type="binding site" evidence="4 5 6 7 9 10 11">
    <location>
        <position position="188"/>
    </location>
    <ligand>
        <name>Ca(2+)</name>
        <dbReference type="ChEBI" id="CHEBI:29108"/>
        <label>3</label>
    </ligand>
</feature>
<feature type="binding site" evidence="4 5 6 7 9 10 11">
    <location>
        <position position="190"/>
    </location>
    <ligand>
        <name>Ca(2+)</name>
        <dbReference type="ChEBI" id="CHEBI:29108"/>
        <label>3</label>
    </ligand>
</feature>
<feature type="binding site" evidence="4 5 6 7 9 10 11">
    <location>
        <position position="195"/>
    </location>
    <ligand>
        <name>Ca(2+)</name>
        <dbReference type="ChEBI" id="CHEBI:29108"/>
        <label>3</label>
    </ligand>
</feature>
<feature type="binding site" evidence="5 6 7 9 10 11">
    <location>
        <position position="227"/>
    </location>
    <ligand>
        <name>Ca(2+)</name>
        <dbReference type="ChEBI" id="CHEBI:29108"/>
        <label>4</label>
    </ligand>
</feature>
<feature type="modified residue" description="N-acetylmethionine" evidence="3">
    <location>
        <position position="1"/>
    </location>
</feature>
<feature type="modified residue" description="Phosphoserine" evidence="3">
    <location>
        <position position="6"/>
    </location>
</feature>
<feature type="modified residue" description="N6-acetyllysine" evidence="3">
    <location>
        <position position="181"/>
    </location>
</feature>
<feature type="sequence conflict" description="In Ref. 3; AAA64828." evidence="8" ref="3">
    <original>S</original>
    <variation>M</variation>
    <location>
        <position position="87"/>
    </location>
</feature>
<feature type="helix" evidence="15">
    <location>
        <begin position="98"/>
        <end position="111"/>
    </location>
</feature>
<feature type="helix" evidence="15">
    <location>
        <begin position="112"/>
        <end position="114"/>
    </location>
</feature>
<feature type="helix" evidence="15">
    <location>
        <begin position="119"/>
        <end position="132"/>
    </location>
</feature>
<feature type="turn" evidence="12">
    <location>
        <begin position="134"/>
        <end position="136"/>
    </location>
</feature>
<feature type="helix" evidence="15">
    <location>
        <begin position="143"/>
        <end position="153"/>
    </location>
</feature>
<feature type="strand" evidence="15">
    <location>
        <begin position="158"/>
        <end position="161"/>
    </location>
</feature>
<feature type="helix" evidence="15">
    <location>
        <begin position="163"/>
        <end position="183"/>
    </location>
</feature>
<feature type="strand" evidence="15">
    <location>
        <begin position="188"/>
        <end position="191"/>
    </location>
</feature>
<feature type="turn" evidence="15">
    <location>
        <begin position="193"/>
        <end position="195"/>
    </location>
</feature>
<feature type="helix" evidence="15">
    <location>
        <begin position="196"/>
        <end position="202"/>
    </location>
</feature>
<feature type="helix" evidence="15">
    <location>
        <begin position="209"/>
        <end position="219"/>
    </location>
</feature>
<feature type="strand" evidence="14">
    <location>
        <begin position="224"/>
        <end position="226"/>
    </location>
</feature>
<feature type="helix" evidence="15">
    <location>
        <begin position="228"/>
        <end position="243"/>
    </location>
</feature>
<feature type="turn" evidence="13">
    <location>
        <begin position="248"/>
        <end position="251"/>
    </location>
</feature>
<feature type="strand" evidence="14">
    <location>
        <begin position="253"/>
        <end position="258"/>
    </location>
</feature>
<feature type="helix" evidence="12">
    <location>
        <begin position="260"/>
        <end position="268"/>
    </location>
</feature>
<evidence type="ECO:0000250" key="1"/>
<evidence type="ECO:0000250" key="2">
    <source>
        <dbReference type="UniProtKB" id="O88456"/>
    </source>
</evidence>
<evidence type="ECO:0000250" key="3">
    <source>
        <dbReference type="UniProtKB" id="P04632"/>
    </source>
</evidence>
<evidence type="ECO:0000255" key="4">
    <source>
        <dbReference type="PROSITE-ProRule" id="PRU00448"/>
    </source>
</evidence>
<evidence type="ECO:0000269" key="5">
    <source>
    </source>
</evidence>
<evidence type="ECO:0000269" key="6">
    <source>
    </source>
</evidence>
<evidence type="ECO:0000269" key="7">
    <source>
    </source>
</evidence>
<evidence type="ECO:0000305" key="8"/>
<evidence type="ECO:0007744" key="9">
    <source>
        <dbReference type="PDB" id="1DVI"/>
    </source>
</evidence>
<evidence type="ECO:0007744" key="10">
    <source>
        <dbReference type="PDB" id="3BOW"/>
    </source>
</evidence>
<evidence type="ECO:0007744" key="11">
    <source>
        <dbReference type="PDB" id="3DF0"/>
    </source>
</evidence>
<evidence type="ECO:0007829" key="12">
    <source>
        <dbReference type="PDB" id="1AJ5"/>
    </source>
</evidence>
<evidence type="ECO:0007829" key="13">
    <source>
        <dbReference type="PDB" id="1DF0"/>
    </source>
</evidence>
<evidence type="ECO:0007829" key="14">
    <source>
        <dbReference type="PDB" id="1DVI"/>
    </source>
</evidence>
<evidence type="ECO:0007829" key="15">
    <source>
        <dbReference type="PDB" id="1NP8"/>
    </source>
</evidence>
<organism>
    <name type="scientific">Rattus norvegicus</name>
    <name type="common">Rat</name>
    <dbReference type="NCBI Taxonomy" id="10116"/>
    <lineage>
        <taxon>Eukaryota</taxon>
        <taxon>Metazoa</taxon>
        <taxon>Chordata</taxon>
        <taxon>Craniata</taxon>
        <taxon>Vertebrata</taxon>
        <taxon>Euteleostomi</taxon>
        <taxon>Mammalia</taxon>
        <taxon>Eutheria</taxon>
        <taxon>Euarchontoglires</taxon>
        <taxon>Glires</taxon>
        <taxon>Rodentia</taxon>
        <taxon>Myomorpha</taxon>
        <taxon>Muroidea</taxon>
        <taxon>Muridae</taxon>
        <taxon>Murinae</taxon>
        <taxon>Rattus</taxon>
    </lineage>
</organism>
<proteinExistence type="evidence at protein level"/>
<dbReference type="EMBL" id="BC098068">
    <property type="protein sequence ID" value="AAH98068.1"/>
    <property type="molecule type" value="mRNA"/>
</dbReference>
<dbReference type="EMBL" id="U53859">
    <property type="protein sequence ID" value="AAC53002.1"/>
    <property type="molecule type" value="mRNA"/>
</dbReference>
<dbReference type="EMBL" id="U10861">
    <property type="protein sequence ID" value="AAA64828.1"/>
    <property type="molecule type" value="mRNA"/>
</dbReference>
<dbReference type="PIR" id="A55143">
    <property type="entry name" value="A55143"/>
</dbReference>
<dbReference type="RefSeq" id="NP_058814.1">
    <property type="nucleotide sequence ID" value="NM_017118.1"/>
</dbReference>
<dbReference type="RefSeq" id="XP_017445520.1">
    <property type="nucleotide sequence ID" value="XM_017590031.1"/>
</dbReference>
<dbReference type="PDB" id="1AJ5">
    <property type="method" value="X-ray"/>
    <property type="resolution" value="2.30 A"/>
    <property type="chains" value="A/B=98-270"/>
</dbReference>
<dbReference type="PDB" id="1DF0">
    <property type="method" value="X-ray"/>
    <property type="resolution" value="2.60 A"/>
    <property type="chains" value="B=88-270"/>
</dbReference>
<dbReference type="PDB" id="1DVI">
    <property type="method" value="X-ray"/>
    <property type="resolution" value="2.30 A"/>
    <property type="chains" value="A/B=88-270"/>
</dbReference>
<dbReference type="PDB" id="1NP8">
    <property type="method" value="X-ray"/>
    <property type="resolution" value="2.00 A"/>
    <property type="chains" value="A/B=91-249"/>
</dbReference>
<dbReference type="PDB" id="1QXP">
    <property type="method" value="X-ray"/>
    <property type="resolution" value="2.80 A"/>
    <property type="chains" value="A/B=88-270"/>
</dbReference>
<dbReference type="PDB" id="1U5I">
    <property type="method" value="X-ray"/>
    <property type="resolution" value="2.86 A"/>
    <property type="chains" value="B=88-270"/>
</dbReference>
<dbReference type="PDB" id="3BOW">
    <property type="method" value="X-ray"/>
    <property type="resolution" value="2.40 A"/>
    <property type="chains" value="B=88-270"/>
</dbReference>
<dbReference type="PDB" id="3DF0">
    <property type="method" value="X-ray"/>
    <property type="resolution" value="2.95 A"/>
    <property type="chains" value="B=87-270"/>
</dbReference>
<dbReference type="PDBsum" id="1AJ5"/>
<dbReference type="PDBsum" id="1DF0"/>
<dbReference type="PDBsum" id="1DVI"/>
<dbReference type="PDBsum" id="1NP8"/>
<dbReference type="PDBsum" id="1QXP"/>
<dbReference type="PDBsum" id="1U5I"/>
<dbReference type="PDBsum" id="3BOW"/>
<dbReference type="PDBsum" id="3DF0"/>
<dbReference type="SMR" id="Q64537"/>
<dbReference type="DIP" id="DIP-6140N"/>
<dbReference type="FunCoup" id="Q64537">
    <property type="interactions" value="1247"/>
</dbReference>
<dbReference type="IntAct" id="Q64537">
    <property type="interactions" value="4"/>
</dbReference>
<dbReference type="MINT" id="Q64537"/>
<dbReference type="STRING" id="10116.ENSRNOP00000064489"/>
<dbReference type="iPTMnet" id="Q64537"/>
<dbReference type="PhosphoSitePlus" id="Q64537"/>
<dbReference type="jPOST" id="Q64537"/>
<dbReference type="PaxDb" id="10116-ENSRNOP00000064489"/>
<dbReference type="GeneID" id="29156"/>
<dbReference type="KEGG" id="rno:29156"/>
<dbReference type="UCSC" id="RGD:2270">
    <property type="organism name" value="rat"/>
</dbReference>
<dbReference type="AGR" id="RGD:2270"/>
<dbReference type="CTD" id="826"/>
<dbReference type="RGD" id="2270">
    <property type="gene designation" value="Capns1"/>
</dbReference>
<dbReference type="eggNOG" id="KOG0037">
    <property type="taxonomic scope" value="Eukaryota"/>
</dbReference>
<dbReference type="InParanoid" id="Q64537"/>
<dbReference type="OrthoDB" id="186625at2759"/>
<dbReference type="PhylomeDB" id="Q64537"/>
<dbReference type="BRENDA" id="3.4.22.B24">
    <property type="organism ID" value="5301"/>
</dbReference>
<dbReference type="Reactome" id="R-RNO-1474228">
    <property type="pathway name" value="Degradation of the extracellular matrix"/>
</dbReference>
<dbReference type="Reactome" id="R-RNO-9856530">
    <property type="pathway name" value="High laminar flow shear stress activates signaling by PIEZO1 and PECAM1:CDH5:KDR in endothelial cells"/>
</dbReference>
<dbReference type="Reactome" id="R-RNO-9860927">
    <property type="pathway name" value="Turbulent (oscillatory, disturbed) flow shear stress activates signaling by PIEZO1 and integrins in endothelial cells"/>
</dbReference>
<dbReference type="EvolutionaryTrace" id="Q64537"/>
<dbReference type="PRO" id="PR:Q64537"/>
<dbReference type="Proteomes" id="UP000002494">
    <property type="component" value="Unplaced"/>
</dbReference>
<dbReference type="GO" id="GO:0110158">
    <property type="term" value="C:calpain complex"/>
    <property type="evidence" value="ECO:0000266"/>
    <property type="project" value="RGD"/>
</dbReference>
<dbReference type="GO" id="GO:0005737">
    <property type="term" value="C:cytoplasm"/>
    <property type="evidence" value="ECO:0000266"/>
    <property type="project" value="RGD"/>
</dbReference>
<dbReference type="GO" id="GO:0005829">
    <property type="term" value="C:cytosol"/>
    <property type="evidence" value="ECO:0000266"/>
    <property type="project" value="RGD"/>
</dbReference>
<dbReference type="GO" id="GO:0016020">
    <property type="term" value="C:membrane"/>
    <property type="evidence" value="ECO:0000266"/>
    <property type="project" value="RGD"/>
</dbReference>
<dbReference type="GO" id="GO:0005886">
    <property type="term" value="C:plasma membrane"/>
    <property type="evidence" value="ECO:0007669"/>
    <property type="project" value="UniProtKB-SubCell"/>
</dbReference>
<dbReference type="GO" id="GO:0005509">
    <property type="term" value="F:calcium ion binding"/>
    <property type="evidence" value="ECO:0000304"/>
    <property type="project" value="RGD"/>
</dbReference>
<dbReference type="GO" id="GO:0004198">
    <property type="term" value="F:calcium-dependent cysteine-type endopeptidase activity"/>
    <property type="evidence" value="ECO:0000266"/>
    <property type="project" value="RGD"/>
</dbReference>
<dbReference type="GO" id="GO:0044877">
    <property type="term" value="F:protein-containing complex binding"/>
    <property type="evidence" value="ECO:0000353"/>
    <property type="project" value="RGD"/>
</dbReference>
<dbReference type="GO" id="GO:0030163">
    <property type="term" value="P:protein catabolic process"/>
    <property type="evidence" value="ECO:0000315"/>
    <property type="project" value="RGD"/>
</dbReference>
<dbReference type="GO" id="GO:0006508">
    <property type="term" value="P:proteolysis"/>
    <property type="evidence" value="ECO:0000266"/>
    <property type="project" value="RGD"/>
</dbReference>
<dbReference type="CDD" id="cd16188">
    <property type="entry name" value="EFh_PEF_CPNS1_2"/>
    <property type="match status" value="1"/>
</dbReference>
<dbReference type="FunFam" id="1.10.238.10:FF:000136">
    <property type="entry name" value="Calpain small subunit 1"/>
    <property type="match status" value="1"/>
</dbReference>
<dbReference type="Gene3D" id="1.10.238.10">
    <property type="entry name" value="EF-hand"/>
    <property type="match status" value="1"/>
</dbReference>
<dbReference type="InterPro" id="IPR011992">
    <property type="entry name" value="EF-hand-dom_pair"/>
</dbReference>
<dbReference type="InterPro" id="IPR018247">
    <property type="entry name" value="EF_Hand_1_Ca_BS"/>
</dbReference>
<dbReference type="InterPro" id="IPR002048">
    <property type="entry name" value="EF_hand_dom"/>
</dbReference>
<dbReference type="PANTHER" id="PTHR46735:SF1">
    <property type="entry name" value="CALPAIN SMALL SUBUNIT 1"/>
    <property type="match status" value="1"/>
</dbReference>
<dbReference type="PANTHER" id="PTHR46735">
    <property type="entry name" value="CALPAIN, SMALL SUBUNIT 1 A-RELATED"/>
    <property type="match status" value="1"/>
</dbReference>
<dbReference type="Pfam" id="PF13833">
    <property type="entry name" value="EF-hand_8"/>
    <property type="match status" value="1"/>
</dbReference>
<dbReference type="SUPFAM" id="SSF47473">
    <property type="entry name" value="EF-hand"/>
    <property type="match status" value="1"/>
</dbReference>
<dbReference type="PROSITE" id="PS00018">
    <property type="entry name" value="EF_HAND_1"/>
    <property type="match status" value="2"/>
</dbReference>
<dbReference type="PROSITE" id="PS50222">
    <property type="entry name" value="EF_HAND_2"/>
    <property type="match status" value="3"/>
</dbReference>
<keyword id="KW-0002">3D-structure</keyword>
<keyword id="KW-0007">Acetylation</keyword>
<keyword id="KW-0106">Calcium</keyword>
<keyword id="KW-1003">Cell membrane</keyword>
<keyword id="KW-0963">Cytoplasm</keyword>
<keyword id="KW-0903">Direct protein sequencing</keyword>
<keyword id="KW-0472">Membrane</keyword>
<keyword id="KW-0479">Metal-binding</keyword>
<keyword id="KW-0597">Phosphoprotein</keyword>
<keyword id="KW-1185">Reference proteome</keyword>
<keyword id="KW-0677">Repeat</keyword>
<reference key="1">
    <citation type="journal article" date="2004" name="Genome Res.">
        <title>The status, quality, and expansion of the NIH full-length cDNA project: the Mammalian Gene Collection (MGC).</title>
        <authorList>
            <consortium name="The MGC Project Team"/>
        </authorList>
    </citation>
    <scope>NUCLEOTIDE SEQUENCE [LARGE SCALE MRNA]</scope>
    <source>
        <tissue>Placenta</tissue>
    </source>
</reference>
<reference key="2">
    <citation type="journal article" date="1996" name="Biochim. Biophys. Acta">
        <title>Primary sequences of rat mu-calpain large and small subunits are, respectively, moderately and highly similar to those of human.</title>
        <authorList>
            <person name="Sorimachi H."/>
            <person name="Amano S."/>
            <person name="Ishiura S."/>
            <person name="Suzuki K."/>
        </authorList>
    </citation>
    <scope>NUCLEOTIDE SEQUENCE [MRNA] OF 4-270</scope>
</reference>
<reference key="3">
    <citation type="journal article" date="1994" name="J. Biol. Chem.">
        <title>Active recombinant rat calpain II. Bacterially produced large and small subunits associate both in vivo and in vitro.</title>
        <authorList>
            <person name="Graham-Siegenthaler K."/>
            <person name="Gauthier S."/>
            <person name="Davies P.L."/>
            <person name="Elce J.S."/>
        </authorList>
    </citation>
    <scope>NUCLEOTIDE SEQUENCE [MRNA] OF 87-270</scope>
    <scope>PARTIAL PROTEIN SEQUENCE</scope>
    <scope>DOMAIN</scope>
    <scope>SUBUNIT</scope>
    <scope>X-RAY CRYSTALLOGRAPHY (2.3 ANGSTROMS) OF 84-266</scope>
</reference>
<reference key="4">
    <citation type="journal article" date="1997" name="Nat. Struct. Biol.">
        <title>Structure of a calpain Ca(2+)-binding domain reveals a novel EF-hand and Ca(2+)-induced conformational changes.</title>
        <authorList>
            <person name="Blanchard H."/>
            <person name="Grochulski P."/>
            <person name="Li Y."/>
            <person name="Arthur J.S.C."/>
            <person name="Davies P.L."/>
            <person name="Elce J.S."/>
            <person name="Cygler M."/>
        </authorList>
    </citation>
    <scope>X-RAY CRYSTALLOGRAPHY (2.30 ANGSTROMS) OF 98-270 IN COMPLEX WITH CALCIUM</scope>
    <scope>SUBUNIT</scope>
    <scope>DOMAIN</scope>
</reference>
<reference key="5">
    <citation type="journal article" date="2003" name="Proteins">
        <title>A second binding site revealed by C-terminal truncation of calpain small subunit, a penta-EF-hand protein.</title>
        <authorList>
            <person name="Leinala E.K."/>
            <person name="Arthur J.S."/>
            <person name="Grochulski P."/>
            <person name="Davies P.L."/>
            <person name="Elce J.S."/>
            <person name="Jia Z."/>
        </authorList>
    </citation>
    <scope>X-RAY CRYSTALLOGRAPHY (2.0 ANGSTROMS) OF 91-249</scope>
    <scope>DOMAIN</scope>
    <scope>SUBUNIT</scope>
</reference>
<reference key="6">
    <citation type="journal article" date="2004" name="J. Mol. Biol.">
        <title>Activation of calpain by Ca2+: roles of the large subunit N-terminal and domain III-IV linker peptides.</title>
        <authorList>
            <person name="Hosfield C.M."/>
            <person name="Elce J.S."/>
            <person name="Jia Z."/>
        </authorList>
    </citation>
    <scope>X-RAY CRYSTALLOGRAPHY (2.86 ANGSTROMS) OF 88-270</scope>
    <scope>SUBUNIT</scope>
</reference>
<reference key="7">
    <citation type="journal article" date="2008" name="Nature">
        <title>Calcium-bound structure of calpain and its mechanism of inhibition by calpastatin.</title>
        <authorList>
            <person name="Hanna R.A."/>
            <person name="Campbell R.L."/>
            <person name="Davies P.L."/>
        </authorList>
    </citation>
    <scope>X-RAY CRYSTALLOGRAPHY (2.40 ANGSTROMS) OF 88-270 IN COMPLEX WITH CAPN2 AND CALPASTATIN</scope>
    <scope>CALCIUM-BINDING SITES</scope>
    <scope>SUBUNIT</scope>
</reference>
<reference key="8">
    <citation type="journal article" date="2008" name="Nature">
        <title>Concerted multi-pronged attack by calpastatin to occlude the catalytic cleft of heterodimeric calpains.</title>
        <authorList>
            <person name="Moldoveanu T."/>
            <person name="Gehring K."/>
            <person name="Green D.R."/>
        </authorList>
    </citation>
    <scope>X-RAY CRYSTALLOGRAPHY (2.95 ANGSTROMS) OF 88-270 IN COMPLEX WITH CAPN2 AND CALPASTATIN</scope>
    <scope>CALCIUM-BINDING SITES</scope>
    <scope>SUBUNIT</scope>
</reference>
<gene>
    <name type="primary">Capns1</name>
    <name type="synonym">Capn4</name>
    <name type="synonym">Css1</name>
</gene>